<organism>
    <name type="scientific">Pectobacterium carotovorum subsp. carotovorum (strain PC1)</name>
    <dbReference type="NCBI Taxonomy" id="561230"/>
    <lineage>
        <taxon>Bacteria</taxon>
        <taxon>Pseudomonadati</taxon>
        <taxon>Pseudomonadota</taxon>
        <taxon>Gammaproteobacteria</taxon>
        <taxon>Enterobacterales</taxon>
        <taxon>Pectobacteriaceae</taxon>
        <taxon>Pectobacterium</taxon>
    </lineage>
</organism>
<proteinExistence type="inferred from homology"/>
<reference key="1">
    <citation type="submission" date="2009-07" db="EMBL/GenBank/DDBJ databases">
        <title>Complete sequence of Pectobacterium carotovorum subsp. carotovorum PC1.</title>
        <authorList>
            <consortium name="US DOE Joint Genome Institute"/>
            <person name="Lucas S."/>
            <person name="Copeland A."/>
            <person name="Lapidus A."/>
            <person name="Glavina del Rio T."/>
            <person name="Tice H."/>
            <person name="Bruce D."/>
            <person name="Goodwin L."/>
            <person name="Pitluck S."/>
            <person name="Munk A.C."/>
            <person name="Brettin T."/>
            <person name="Detter J.C."/>
            <person name="Han C."/>
            <person name="Tapia R."/>
            <person name="Larimer F."/>
            <person name="Land M."/>
            <person name="Hauser L."/>
            <person name="Kyrpides N."/>
            <person name="Mikhailova N."/>
            <person name="Balakrishnan V."/>
            <person name="Glasner J."/>
            <person name="Perna N.T."/>
        </authorList>
    </citation>
    <scope>NUCLEOTIDE SEQUENCE [LARGE SCALE GENOMIC DNA]</scope>
    <source>
        <strain>PC1</strain>
    </source>
</reference>
<protein>
    <recommendedName>
        <fullName evidence="1">Tyrosine--tRNA ligase</fullName>
        <ecNumber evidence="1">6.1.1.1</ecNumber>
    </recommendedName>
    <alternativeName>
        <fullName evidence="1">Tyrosyl-tRNA synthetase</fullName>
        <shortName evidence="1">TyrRS</shortName>
    </alternativeName>
</protein>
<comment type="function">
    <text evidence="1">Catalyzes the attachment of tyrosine to tRNA(Tyr) in a two-step reaction: tyrosine is first activated by ATP to form Tyr-AMP and then transferred to the acceptor end of tRNA(Tyr).</text>
</comment>
<comment type="catalytic activity">
    <reaction evidence="1">
        <text>tRNA(Tyr) + L-tyrosine + ATP = L-tyrosyl-tRNA(Tyr) + AMP + diphosphate + H(+)</text>
        <dbReference type="Rhea" id="RHEA:10220"/>
        <dbReference type="Rhea" id="RHEA-COMP:9706"/>
        <dbReference type="Rhea" id="RHEA-COMP:9707"/>
        <dbReference type="ChEBI" id="CHEBI:15378"/>
        <dbReference type="ChEBI" id="CHEBI:30616"/>
        <dbReference type="ChEBI" id="CHEBI:33019"/>
        <dbReference type="ChEBI" id="CHEBI:58315"/>
        <dbReference type="ChEBI" id="CHEBI:78442"/>
        <dbReference type="ChEBI" id="CHEBI:78536"/>
        <dbReference type="ChEBI" id="CHEBI:456215"/>
        <dbReference type="EC" id="6.1.1.1"/>
    </reaction>
</comment>
<comment type="subunit">
    <text evidence="1">Homodimer.</text>
</comment>
<comment type="subcellular location">
    <subcellularLocation>
        <location evidence="1">Cytoplasm</location>
    </subcellularLocation>
</comment>
<comment type="similarity">
    <text evidence="1">Belongs to the class-I aminoacyl-tRNA synthetase family. TyrS type 1 subfamily.</text>
</comment>
<keyword id="KW-0030">Aminoacyl-tRNA synthetase</keyword>
<keyword id="KW-0067">ATP-binding</keyword>
<keyword id="KW-0963">Cytoplasm</keyword>
<keyword id="KW-0436">Ligase</keyword>
<keyword id="KW-0547">Nucleotide-binding</keyword>
<keyword id="KW-0648">Protein biosynthesis</keyword>
<keyword id="KW-0694">RNA-binding</keyword>
<evidence type="ECO:0000255" key="1">
    <source>
        <dbReference type="HAMAP-Rule" id="MF_02006"/>
    </source>
</evidence>
<feature type="chain" id="PRO_1000216277" description="Tyrosine--tRNA ligase">
    <location>
        <begin position="1"/>
        <end position="425"/>
    </location>
</feature>
<feature type="domain" description="S4 RNA-binding" evidence="1">
    <location>
        <begin position="357"/>
        <end position="414"/>
    </location>
</feature>
<feature type="short sequence motif" description="'HIGH' region">
    <location>
        <begin position="42"/>
        <end position="51"/>
    </location>
</feature>
<feature type="short sequence motif" description="'KMSKS' region">
    <location>
        <begin position="235"/>
        <end position="239"/>
    </location>
</feature>
<feature type="binding site" evidence="1">
    <location>
        <position position="37"/>
    </location>
    <ligand>
        <name>L-tyrosine</name>
        <dbReference type="ChEBI" id="CHEBI:58315"/>
    </ligand>
</feature>
<feature type="binding site" evidence="1">
    <location>
        <position position="175"/>
    </location>
    <ligand>
        <name>L-tyrosine</name>
        <dbReference type="ChEBI" id="CHEBI:58315"/>
    </ligand>
</feature>
<feature type="binding site" evidence="1">
    <location>
        <position position="179"/>
    </location>
    <ligand>
        <name>L-tyrosine</name>
        <dbReference type="ChEBI" id="CHEBI:58315"/>
    </ligand>
</feature>
<feature type="binding site" evidence="1">
    <location>
        <position position="238"/>
    </location>
    <ligand>
        <name>ATP</name>
        <dbReference type="ChEBI" id="CHEBI:30616"/>
    </ligand>
</feature>
<name>SYY_PECCP</name>
<dbReference type="EC" id="6.1.1.1" evidence="1"/>
<dbReference type="EMBL" id="CP001657">
    <property type="protein sequence ID" value="ACT13408.1"/>
    <property type="molecule type" value="Genomic_DNA"/>
</dbReference>
<dbReference type="RefSeq" id="WP_015840590.1">
    <property type="nucleotide sequence ID" value="NC_012917.1"/>
</dbReference>
<dbReference type="SMR" id="C6DK25"/>
<dbReference type="STRING" id="561230.PC1_2377"/>
<dbReference type="KEGG" id="pct:PC1_2377"/>
<dbReference type="eggNOG" id="COG0162">
    <property type="taxonomic scope" value="Bacteria"/>
</dbReference>
<dbReference type="HOGENOM" id="CLU_024003_0_3_6"/>
<dbReference type="OrthoDB" id="9804243at2"/>
<dbReference type="Proteomes" id="UP000002736">
    <property type="component" value="Chromosome"/>
</dbReference>
<dbReference type="GO" id="GO:0005829">
    <property type="term" value="C:cytosol"/>
    <property type="evidence" value="ECO:0007669"/>
    <property type="project" value="TreeGrafter"/>
</dbReference>
<dbReference type="GO" id="GO:0005524">
    <property type="term" value="F:ATP binding"/>
    <property type="evidence" value="ECO:0007669"/>
    <property type="project" value="UniProtKB-UniRule"/>
</dbReference>
<dbReference type="GO" id="GO:0003723">
    <property type="term" value="F:RNA binding"/>
    <property type="evidence" value="ECO:0007669"/>
    <property type="project" value="UniProtKB-KW"/>
</dbReference>
<dbReference type="GO" id="GO:0004831">
    <property type="term" value="F:tyrosine-tRNA ligase activity"/>
    <property type="evidence" value="ECO:0007669"/>
    <property type="project" value="UniProtKB-UniRule"/>
</dbReference>
<dbReference type="GO" id="GO:0006437">
    <property type="term" value="P:tyrosyl-tRNA aminoacylation"/>
    <property type="evidence" value="ECO:0007669"/>
    <property type="project" value="UniProtKB-UniRule"/>
</dbReference>
<dbReference type="CDD" id="cd00165">
    <property type="entry name" value="S4"/>
    <property type="match status" value="1"/>
</dbReference>
<dbReference type="CDD" id="cd00805">
    <property type="entry name" value="TyrRS_core"/>
    <property type="match status" value="1"/>
</dbReference>
<dbReference type="FunFam" id="1.10.240.10:FF:000001">
    <property type="entry name" value="Tyrosine--tRNA ligase"/>
    <property type="match status" value="1"/>
</dbReference>
<dbReference type="FunFam" id="3.40.50.620:FF:000008">
    <property type="entry name" value="Tyrosine--tRNA ligase"/>
    <property type="match status" value="1"/>
</dbReference>
<dbReference type="Gene3D" id="3.40.50.620">
    <property type="entry name" value="HUPs"/>
    <property type="match status" value="1"/>
</dbReference>
<dbReference type="Gene3D" id="3.10.290.10">
    <property type="entry name" value="RNA-binding S4 domain"/>
    <property type="match status" value="1"/>
</dbReference>
<dbReference type="Gene3D" id="1.10.240.10">
    <property type="entry name" value="Tyrosyl-Transfer RNA Synthetase"/>
    <property type="match status" value="1"/>
</dbReference>
<dbReference type="HAMAP" id="MF_02006">
    <property type="entry name" value="Tyr_tRNA_synth_type1"/>
    <property type="match status" value="1"/>
</dbReference>
<dbReference type="InterPro" id="IPR001412">
    <property type="entry name" value="aa-tRNA-synth_I_CS"/>
</dbReference>
<dbReference type="InterPro" id="IPR002305">
    <property type="entry name" value="aa-tRNA-synth_Ic"/>
</dbReference>
<dbReference type="InterPro" id="IPR014729">
    <property type="entry name" value="Rossmann-like_a/b/a_fold"/>
</dbReference>
<dbReference type="InterPro" id="IPR002942">
    <property type="entry name" value="S4_RNA-bd"/>
</dbReference>
<dbReference type="InterPro" id="IPR036986">
    <property type="entry name" value="S4_RNA-bd_sf"/>
</dbReference>
<dbReference type="InterPro" id="IPR054608">
    <property type="entry name" value="SYY-like_C"/>
</dbReference>
<dbReference type="InterPro" id="IPR002307">
    <property type="entry name" value="Tyr-tRNA-ligase"/>
</dbReference>
<dbReference type="InterPro" id="IPR024088">
    <property type="entry name" value="Tyr-tRNA-ligase_bac-type"/>
</dbReference>
<dbReference type="InterPro" id="IPR024107">
    <property type="entry name" value="Tyr-tRNA-ligase_bac_1"/>
</dbReference>
<dbReference type="NCBIfam" id="TIGR00234">
    <property type="entry name" value="tyrS"/>
    <property type="match status" value="1"/>
</dbReference>
<dbReference type="PANTHER" id="PTHR11766:SF0">
    <property type="entry name" value="TYROSINE--TRNA LIGASE, MITOCHONDRIAL"/>
    <property type="match status" value="1"/>
</dbReference>
<dbReference type="PANTHER" id="PTHR11766">
    <property type="entry name" value="TYROSYL-TRNA SYNTHETASE"/>
    <property type="match status" value="1"/>
</dbReference>
<dbReference type="Pfam" id="PF22421">
    <property type="entry name" value="SYY_C-terminal"/>
    <property type="match status" value="1"/>
</dbReference>
<dbReference type="Pfam" id="PF00579">
    <property type="entry name" value="tRNA-synt_1b"/>
    <property type="match status" value="1"/>
</dbReference>
<dbReference type="PRINTS" id="PR01040">
    <property type="entry name" value="TRNASYNTHTYR"/>
</dbReference>
<dbReference type="SMART" id="SM00363">
    <property type="entry name" value="S4"/>
    <property type="match status" value="1"/>
</dbReference>
<dbReference type="SUPFAM" id="SSF55174">
    <property type="entry name" value="Alpha-L RNA-binding motif"/>
    <property type="match status" value="1"/>
</dbReference>
<dbReference type="SUPFAM" id="SSF52374">
    <property type="entry name" value="Nucleotidylyl transferase"/>
    <property type="match status" value="1"/>
</dbReference>
<dbReference type="PROSITE" id="PS00178">
    <property type="entry name" value="AA_TRNA_LIGASE_I"/>
    <property type="match status" value="1"/>
</dbReference>
<dbReference type="PROSITE" id="PS50889">
    <property type="entry name" value="S4"/>
    <property type="match status" value="1"/>
</dbReference>
<sequence>MASSNLIKQLQERGLIAQVTDEGALAERLAQGPIALYCGFDPTADSLHLGHLVPLLCLKRFQLAGHKPVALVGGATGLIGDPSFKATERKLNTADTVGEWVEKIRRQVSPFLDFDCGKNSAIAANNYDWFGGMNVLDFLRDIGKHFSVNQMINKEAVKQRLNRDDVGISFTEFSYNLLQGYDFASLNKQHDVELQIGGSDQWGNITSGIDLTRRMNQKQVYGLTVPLITKSDGTKFGKTEGGAIWLDASKTSPYKFYQFWINTADADVYRFLKFFTFMSLEDIDALEEEDKNSGKAPRAQYVLAEEVTRMVHGEAGLEAARRITQSLFSGALQDMTQDDFAQLAQDGMPIIELENGADLQQALVSAELVPSRGQARTMISSNAVTINGEKQADPEYTFSASDRLFDRYTLLRRGKKHYCLICWKA</sequence>
<accession>C6DK25</accession>
<gene>
    <name evidence="1" type="primary">tyrS</name>
    <name type="ordered locus">PC1_2377</name>
</gene>